<sequence length="163" mass="17509">MLTVSLLVCAMMALTQANDDKILKGTATEAGPVSQRAPPNCPAGWQPLGDRCIYYETTAMTWALAETNCMKLGGHLASIHSQEEHSFIQTLNAGVVWIGGSACLQAGAWTWSDGTPMNFRSWCSTKPDDVLAACCMQMTAAADQCWDDLPCPASHKSVCAMTF</sequence>
<protein>
    <recommendedName>
        <fullName>Type-2 ice-structuring protein</fullName>
    </recommendedName>
    <alternativeName>
        <fullName>Type II antifreeze protein</fullName>
        <shortName>AFP</shortName>
    </alternativeName>
</protein>
<reference key="1">
    <citation type="journal article" date="1986" name="J. Biol. Chem.">
        <title>Structure of an antifreeze polypeptide precursor from the sea raven, Hemitripterus americanus.</title>
        <authorList>
            <person name="Ng N.F.L."/>
            <person name="Trinh K.-Y."/>
            <person name="Hew C.-L."/>
        </authorList>
    </citation>
    <scope>NUCLEOTIDE SEQUENCE [MRNA]</scope>
</reference>
<reference key="2">
    <citation type="journal article" date="1989" name="J. Biol. Chem.">
        <title>Cystine-rich type II antifreeze protein precursor is initiated from the third AUG codon of its mRNA.</title>
        <authorList>
            <person name="Hayes P."/>
            <person name="Scott G.K."/>
            <person name="Ng N.F.L."/>
            <person name="Hew C.-L."/>
            <person name="Davies P.L."/>
        </authorList>
    </citation>
    <scope>NUCLEOTIDE SEQUENCE [GENOMIC DNA / MRNA]</scope>
    <scope>PROTEIN SEQUENCE OF 36-41; 52-63; 95-97; 111-116 AND 121-137</scope>
    <scope>SUBCELLULAR LOCATION</scope>
    <scope>PTM</scope>
</reference>
<reference key="3">
    <citation type="journal article" date="1992" name="J. Biol. Chem.">
        <title>Structure of an antifreeze polypeptide from the sea raven. Disulfide bonds and similarity to lectin-binding proteins.</title>
        <authorList>
            <person name="Ng N.F.L."/>
            <person name="Hew C.-L."/>
        </authorList>
    </citation>
    <scope>PRELIMINARY DISULFIDE BONDS</scope>
    <scope>SIMILARITY TO C-TYPE LECTINS</scope>
</reference>
<reference key="4">
    <citation type="journal article" date="1998" name="Biochemistry">
        <title>The solution structure of type II antifreeze protein reveals a new member of the lectin family.</title>
        <authorList>
            <person name="Gronwald W."/>
            <person name="Loewen M.C."/>
            <person name="Lix B."/>
            <person name="Daugulis A.J."/>
            <person name="Soennichsen F.D."/>
            <person name="Davies P.L."/>
            <person name="Sykes B.D."/>
        </authorList>
    </citation>
    <scope>STRUCTURE BY NMR</scope>
    <scope>DISULFIDE BONDS</scope>
</reference>
<keyword id="KW-0002">3D-structure</keyword>
<keyword id="KW-0047">Antifreeze protein</keyword>
<keyword id="KW-0903">Direct protein sequencing</keyword>
<keyword id="KW-1015">Disulfide bond</keyword>
<keyword id="KW-0430">Lectin</keyword>
<keyword id="KW-0964">Secreted</keyword>
<keyword id="KW-0732">Signal</keyword>
<evidence type="ECO:0000255" key="1"/>
<evidence type="ECO:0000255" key="2">
    <source>
        <dbReference type="PROSITE-ProRule" id="PRU00040"/>
    </source>
</evidence>
<evidence type="ECO:0000269" key="3">
    <source>
    </source>
</evidence>
<evidence type="ECO:0000269" key="4">
    <source>
    </source>
</evidence>
<evidence type="ECO:0000305" key="5"/>
<evidence type="ECO:0000305" key="6">
    <source>
    </source>
</evidence>
<evidence type="ECO:0007829" key="7">
    <source>
        <dbReference type="PDB" id="2AFP"/>
    </source>
</evidence>
<comment type="function">
    <text>Antifreeze proteins lower the blood freezing point.</text>
</comment>
<comment type="subcellular location">
    <subcellularLocation>
        <location evidence="3">Secreted</location>
    </subcellularLocation>
</comment>
<comment type="PTM">
    <text evidence="3">The N-terminus is blocked.</text>
</comment>
<comment type="sequence caution" evidence="5">
    <conflict type="erroneous initiation">
        <sequence resource="EMBL-CDS" id="AAA49617"/>
    </conflict>
</comment>
<name>ISP2_HEMAM</name>
<accession>P05140</accession>
<proteinExistence type="evidence at protein level"/>
<dbReference type="EMBL" id="J02593">
    <property type="protein sequence ID" value="AAA49617.1"/>
    <property type="status" value="ALT_INIT"/>
    <property type="molecule type" value="mRNA"/>
</dbReference>
<dbReference type="EMBL" id="J05100">
    <property type="protein sequence ID" value="AAA49618.1"/>
    <property type="molecule type" value="Genomic_DNA"/>
</dbReference>
<dbReference type="PIR" id="A34313">
    <property type="entry name" value="A34313"/>
</dbReference>
<dbReference type="PDB" id="2AFP">
    <property type="method" value="NMR"/>
    <property type="chains" value="A=35-163"/>
</dbReference>
<dbReference type="PDBsum" id="2AFP"/>
<dbReference type="BMRB" id="P05140"/>
<dbReference type="SMR" id="P05140"/>
<dbReference type="EvolutionaryTrace" id="P05140"/>
<dbReference type="GO" id="GO:0005576">
    <property type="term" value="C:extracellular region"/>
    <property type="evidence" value="ECO:0007669"/>
    <property type="project" value="UniProtKB-SubCell"/>
</dbReference>
<dbReference type="GO" id="GO:0030246">
    <property type="term" value="F:carbohydrate binding"/>
    <property type="evidence" value="ECO:0007669"/>
    <property type="project" value="UniProtKB-KW"/>
</dbReference>
<dbReference type="CDD" id="cd00037">
    <property type="entry name" value="CLECT"/>
    <property type="match status" value="1"/>
</dbReference>
<dbReference type="Gene3D" id="3.10.100.10">
    <property type="entry name" value="Mannose-Binding Protein A, subunit A"/>
    <property type="match status" value="1"/>
</dbReference>
<dbReference type="InterPro" id="IPR002353">
    <property type="entry name" value="AntifreezeII"/>
</dbReference>
<dbReference type="InterPro" id="IPR001304">
    <property type="entry name" value="C-type_lectin-like"/>
</dbReference>
<dbReference type="InterPro" id="IPR016186">
    <property type="entry name" value="C-type_lectin-like/link_sf"/>
</dbReference>
<dbReference type="InterPro" id="IPR050111">
    <property type="entry name" value="C-type_lectin/snaclec_domain"/>
</dbReference>
<dbReference type="InterPro" id="IPR018378">
    <property type="entry name" value="C-type_lectin_CS"/>
</dbReference>
<dbReference type="InterPro" id="IPR016187">
    <property type="entry name" value="CTDL_fold"/>
</dbReference>
<dbReference type="PANTHER" id="PTHR22803">
    <property type="entry name" value="MANNOSE, PHOSPHOLIPASE, LECTIN RECEPTOR RELATED"/>
    <property type="match status" value="1"/>
</dbReference>
<dbReference type="Pfam" id="PF00059">
    <property type="entry name" value="Lectin_C"/>
    <property type="match status" value="1"/>
</dbReference>
<dbReference type="PRINTS" id="PR00356">
    <property type="entry name" value="ANTIFREEZEII"/>
</dbReference>
<dbReference type="SMART" id="SM00034">
    <property type="entry name" value="CLECT"/>
    <property type="match status" value="1"/>
</dbReference>
<dbReference type="SUPFAM" id="SSF56436">
    <property type="entry name" value="C-type lectin-like"/>
    <property type="match status" value="1"/>
</dbReference>
<dbReference type="PROSITE" id="PS00615">
    <property type="entry name" value="C_TYPE_LECTIN_1"/>
    <property type="match status" value="1"/>
</dbReference>
<dbReference type="PROSITE" id="PS50041">
    <property type="entry name" value="C_TYPE_LECTIN_2"/>
    <property type="match status" value="1"/>
</dbReference>
<feature type="signal peptide" evidence="1">
    <location>
        <begin position="1"/>
        <end position="17"/>
    </location>
</feature>
<feature type="propeptide" id="PRO_0000017544" evidence="6">
    <location>
        <begin position="18"/>
        <end position="34"/>
    </location>
</feature>
<feature type="chain" id="PRO_0000017545" description="Type-2 ice-structuring protein" evidence="6">
    <location>
        <begin position="35"/>
        <end position="163"/>
    </location>
</feature>
<feature type="domain" description="C-type lectin" evidence="2">
    <location>
        <begin position="39"/>
        <end position="163"/>
    </location>
</feature>
<feature type="disulfide bond" evidence="2 4">
    <location>
        <begin position="41"/>
        <end position="52"/>
    </location>
</feature>
<feature type="disulfide bond" evidence="2 4">
    <location>
        <begin position="69"/>
        <end position="159"/>
    </location>
</feature>
<feature type="disulfide bond" evidence="2 4">
    <location>
        <begin position="103"/>
        <end position="134"/>
    </location>
</feature>
<feature type="disulfide bond" evidence="2 4">
    <location>
        <begin position="123"/>
        <end position="145"/>
    </location>
</feature>
<feature type="disulfide bond" evidence="2 4">
    <location>
        <begin position="135"/>
        <end position="151"/>
    </location>
</feature>
<feature type="sequence conflict" description="In Ref. 2; AAA49618." evidence="5" ref="2">
    <original>P</original>
    <variation>G</variation>
    <location>
        <position position="38"/>
    </location>
</feature>
<feature type="strand" evidence="7">
    <location>
        <begin position="43"/>
        <end position="45"/>
    </location>
</feature>
<feature type="strand" evidence="7">
    <location>
        <begin position="49"/>
        <end position="53"/>
    </location>
</feature>
<feature type="helix" evidence="7">
    <location>
        <begin position="62"/>
        <end position="72"/>
    </location>
</feature>
<feature type="strand" evidence="7">
    <location>
        <begin position="80"/>
        <end position="82"/>
    </location>
</feature>
<feature type="helix" evidence="7">
    <location>
        <begin position="83"/>
        <end position="91"/>
    </location>
</feature>
<feature type="strand" evidence="7">
    <location>
        <begin position="103"/>
        <end position="107"/>
    </location>
</feature>
<feature type="strand" evidence="7">
    <location>
        <begin position="110"/>
        <end position="114"/>
    </location>
</feature>
<feature type="strand" evidence="7">
    <location>
        <begin position="122"/>
        <end position="124"/>
    </location>
</feature>
<feature type="strand" evidence="7">
    <location>
        <begin position="141"/>
        <end position="144"/>
    </location>
</feature>
<feature type="strand" evidence="7">
    <location>
        <begin position="159"/>
        <end position="161"/>
    </location>
</feature>
<organism>
    <name type="scientific">Hemitripterus americanus</name>
    <name type="common">Sea raven</name>
    <dbReference type="NCBI Taxonomy" id="8094"/>
    <lineage>
        <taxon>Eukaryota</taxon>
        <taxon>Metazoa</taxon>
        <taxon>Chordata</taxon>
        <taxon>Craniata</taxon>
        <taxon>Vertebrata</taxon>
        <taxon>Euteleostomi</taxon>
        <taxon>Actinopterygii</taxon>
        <taxon>Neopterygii</taxon>
        <taxon>Teleostei</taxon>
        <taxon>Neoteleostei</taxon>
        <taxon>Acanthomorphata</taxon>
        <taxon>Eupercaria</taxon>
        <taxon>Perciformes</taxon>
        <taxon>Cottioidei</taxon>
        <taxon>Cottales</taxon>
        <taxon>Agonidae</taxon>
        <taxon>Hemitripterinae</taxon>
        <taxon>Hemitripterus</taxon>
    </lineage>
</organism>